<organism>
    <name type="scientific">Burkholderia pseudomallei (strain 668)</name>
    <dbReference type="NCBI Taxonomy" id="320373"/>
    <lineage>
        <taxon>Bacteria</taxon>
        <taxon>Pseudomonadati</taxon>
        <taxon>Pseudomonadota</taxon>
        <taxon>Betaproteobacteria</taxon>
        <taxon>Burkholderiales</taxon>
        <taxon>Burkholderiaceae</taxon>
        <taxon>Burkholderia</taxon>
        <taxon>pseudomallei group</taxon>
    </lineage>
</organism>
<comment type="function">
    <text evidence="1">Involved in the final reduction of the elongation cycle of fatty acid synthesis (FAS II). Catalyzes the reduction of a carbon-carbon double bond in an enoyl moiety that is covalently linked to an acyl carrier protein (ACP).</text>
</comment>
<comment type="catalytic activity">
    <reaction evidence="1">
        <text>a 2,3-saturated acyl-[ACP] + NAD(+) = a (2E)-enoyl-[ACP] + NADH + H(+)</text>
        <dbReference type="Rhea" id="RHEA:10240"/>
        <dbReference type="Rhea" id="RHEA-COMP:9925"/>
        <dbReference type="Rhea" id="RHEA-COMP:9926"/>
        <dbReference type="ChEBI" id="CHEBI:15378"/>
        <dbReference type="ChEBI" id="CHEBI:57540"/>
        <dbReference type="ChEBI" id="CHEBI:57945"/>
        <dbReference type="ChEBI" id="CHEBI:78784"/>
        <dbReference type="ChEBI" id="CHEBI:78785"/>
        <dbReference type="EC" id="1.3.1.9"/>
    </reaction>
</comment>
<comment type="pathway">
    <text evidence="1">Lipid metabolism; fatty acid biosynthesis.</text>
</comment>
<comment type="subunit">
    <text evidence="1">Monomer.</text>
</comment>
<comment type="similarity">
    <text evidence="1">Belongs to the TER reductase family.</text>
</comment>
<dbReference type="EC" id="1.3.1.9" evidence="1"/>
<dbReference type="EMBL" id="CP000570">
    <property type="protein sequence ID" value="ABN81709.1"/>
    <property type="molecule type" value="Genomic_DNA"/>
</dbReference>
<dbReference type="RefSeq" id="WP_011851489.1">
    <property type="nucleotide sequence ID" value="NC_009074.1"/>
</dbReference>
<dbReference type="SMR" id="A3N8J6"/>
<dbReference type="KEGG" id="bpd:BURPS668_1626"/>
<dbReference type="HOGENOM" id="CLU_057698_1_0_4"/>
<dbReference type="UniPathway" id="UPA00094"/>
<dbReference type="GO" id="GO:0004318">
    <property type="term" value="F:enoyl-[acyl-carrier-protein] reductase (NADH) activity"/>
    <property type="evidence" value="ECO:0007669"/>
    <property type="project" value="UniProtKB-UniRule"/>
</dbReference>
<dbReference type="GO" id="GO:0051287">
    <property type="term" value="F:NAD binding"/>
    <property type="evidence" value="ECO:0007669"/>
    <property type="project" value="UniProtKB-UniRule"/>
</dbReference>
<dbReference type="GO" id="GO:0050343">
    <property type="term" value="F:trans-2-enoyl-CoA reductase (NADH) activity"/>
    <property type="evidence" value="ECO:0007669"/>
    <property type="project" value="TreeGrafter"/>
</dbReference>
<dbReference type="GO" id="GO:0006633">
    <property type="term" value="P:fatty acid biosynthetic process"/>
    <property type="evidence" value="ECO:0007669"/>
    <property type="project" value="UniProtKB-UniRule"/>
</dbReference>
<dbReference type="FunFam" id="3.40.50.720:FF:000221">
    <property type="entry name" value="Enoyl-[acyl-carrier-protein] reductase [NADH]"/>
    <property type="match status" value="1"/>
</dbReference>
<dbReference type="Gene3D" id="3.40.50.720">
    <property type="entry name" value="NAD(P)-binding Rossmann-like Domain"/>
    <property type="match status" value="1"/>
</dbReference>
<dbReference type="HAMAP" id="MF_01838">
    <property type="entry name" value="FabV_reductase"/>
    <property type="match status" value="1"/>
</dbReference>
<dbReference type="InterPro" id="IPR024906">
    <property type="entry name" value="Eno_Rdtase_FAD-bd_dom"/>
</dbReference>
<dbReference type="InterPro" id="IPR024910">
    <property type="entry name" value="Enoyl-CoA_Rdtase_cat_dom"/>
</dbReference>
<dbReference type="InterPro" id="IPR050048">
    <property type="entry name" value="FabV-like_NADH_b"/>
</dbReference>
<dbReference type="InterPro" id="IPR010758">
    <property type="entry name" value="Trans-2-enoyl-CoA_reductase"/>
</dbReference>
<dbReference type="NCBIfam" id="NF043048">
    <property type="entry name" value="EnoyACPredFabV"/>
    <property type="match status" value="1"/>
</dbReference>
<dbReference type="NCBIfam" id="NF010177">
    <property type="entry name" value="PRK13656.1"/>
    <property type="match status" value="1"/>
</dbReference>
<dbReference type="PANTHER" id="PTHR37480">
    <property type="entry name" value="ENOYL-[ACYL-CARRIER-PROTEIN] REDUCTASE [NADH]"/>
    <property type="match status" value="1"/>
</dbReference>
<dbReference type="PANTHER" id="PTHR37480:SF1">
    <property type="entry name" value="ENOYL-[ACYL-CARRIER-PROTEIN] REDUCTASE [NADH]"/>
    <property type="match status" value="1"/>
</dbReference>
<dbReference type="Pfam" id="PF07055">
    <property type="entry name" value="Eno-Rase_FAD_bd"/>
    <property type="match status" value="1"/>
</dbReference>
<dbReference type="Pfam" id="PF12242">
    <property type="entry name" value="Eno-Rase_NADH_b"/>
    <property type="match status" value="1"/>
</dbReference>
<dbReference type="Pfam" id="PF12241">
    <property type="entry name" value="Enoyl_reductase"/>
    <property type="match status" value="1"/>
</dbReference>
<reference key="1">
    <citation type="journal article" date="2010" name="Genome Biol. Evol.">
        <title>Continuing evolution of Burkholderia mallei through genome reduction and large-scale rearrangements.</title>
        <authorList>
            <person name="Losada L."/>
            <person name="Ronning C.M."/>
            <person name="DeShazer D."/>
            <person name="Woods D."/>
            <person name="Fedorova N."/>
            <person name="Kim H.S."/>
            <person name="Shabalina S.A."/>
            <person name="Pearson T.R."/>
            <person name="Brinkac L."/>
            <person name="Tan P."/>
            <person name="Nandi T."/>
            <person name="Crabtree J."/>
            <person name="Badger J."/>
            <person name="Beckstrom-Sternberg S."/>
            <person name="Saqib M."/>
            <person name="Schutzer S.E."/>
            <person name="Keim P."/>
            <person name="Nierman W.C."/>
        </authorList>
    </citation>
    <scope>NUCLEOTIDE SEQUENCE [LARGE SCALE GENOMIC DNA]</scope>
    <source>
        <strain>668</strain>
    </source>
</reference>
<protein>
    <recommendedName>
        <fullName evidence="1">Enoyl-[acyl-carrier-protein] reductase [NADH]</fullName>
        <shortName evidence="1">ENR</shortName>
        <ecNumber evidence="1">1.3.1.9</ecNumber>
    </recommendedName>
</protein>
<feature type="chain" id="PRO_1000070474" description="Enoyl-[acyl-carrier-protein] reductase [NADH]">
    <location>
        <begin position="1"/>
        <end position="397"/>
    </location>
</feature>
<feature type="active site" description="Proton donor" evidence="1">
    <location>
        <position position="235"/>
    </location>
</feature>
<feature type="binding site" evidence="1">
    <location>
        <begin position="48"/>
        <end position="53"/>
    </location>
    <ligand>
        <name>NAD(+)</name>
        <dbReference type="ChEBI" id="CHEBI:57540"/>
    </ligand>
</feature>
<feature type="binding site" evidence="1">
    <location>
        <begin position="74"/>
        <end position="75"/>
    </location>
    <ligand>
        <name>NAD(+)</name>
        <dbReference type="ChEBI" id="CHEBI:57540"/>
    </ligand>
</feature>
<feature type="binding site" evidence="1">
    <location>
        <begin position="111"/>
        <end position="112"/>
    </location>
    <ligand>
        <name>NAD(+)</name>
        <dbReference type="ChEBI" id="CHEBI:57540"/>
    </ligand>
</feature>
<feature type="binding site" evidence="1">
    <location>
        <begin position="139"/>
        <end position="140"/>
    </location>
    <ligand>
        <name>NAD(+)</name>
        <dbReference type="ChEBI" id="CHEBI:57540"/>
    </ligand>
</feature>
<feature type="binding site" evidence="1">
    <location>
        <position position="225"/>
    </location>
    <ligand>
        <name>substrate</name>
    </ligand>
</feature>
<feature type="binding site" evidence="1">
    <location>
        <position position="244"/>
    </location>
    <ligand>
        <name>NAD(+)</name>
        <dbReference type="ChEBI" id="CHEBI:57540"/>
    </ligand>
</feature>
<feature type="binding site" evidence="1">
    <location>
        <begin position="273"/>
        <end position="275"/>
    </location>
    <ligand>
        <name>NAD(+)</name>
        <dbReference type="ChEBI" id="CHEBI:57540"/>
    </ligand>
</feature>
<feature type="site" description="Plays an important role in discriminating NADH against NADPH" evidence="1">
    <location>
        <position position="75"/>
    </location>
</feature>
<evidence type="ECO:0000255" key="1">
    <source>
        <dbReference type="HAMAP-Rule" id="MF_01838"/>
    </source>
</evidence>
<gene>
    <name evidence="1" type="primary">fabV</name>
    <name type="ordered locus">BURPS668_1626</name>
</gene>
<accession>A3N8J6</accession>
<name>FABV_BURP6</name>
<keyword id="KW-0275">Fatty acid biosynthesis</keyword>
<keyword id="KW-0276">Fatty acid metabolism</keyword>
<keyword id="KW-0444">Lipid biosynthesis</keyword>
<keyword id="KW-0443">Lipid metabolism</keyword>
<keyword id="KW-0520">NAD</keyword>
<keyword id="KW-0560">Oxidoreductase</keyword>
<sequence length="397" mass="42788">MIIKPRVRGFICVTTHPAGCAASVREQIAYVARRGPIERGPKKVLVIGASTGYGLAARIAAAFGAGAATLGVFFERAPADAKPGTAGWYNSAAFHDEAAARGLQATSINGDAFSDEIKHKTIDAIRRDLGQVDLVVYSVAAPRRTHPKTGVTHQSTLKPIGHAVRLRGIDTDNEAIKETLLQPATPDEIADTVAVMGGEDWRMWIDALDAAGVLADGAKTTAFTYLGEQVTHDIYWNGSIGEAKKDLDRTVLALRGKLAARGGDARVSVLKAVVTQASSAIPMMPLYLSLLFKVMKARGTHEGCIEQVDGLLRDSLYGAQPHVDAEGRLRADRLELDPAVQTRVLELWDQVTDDNLYTLTDFAGYKAEFLRLFGFGIDGVDYDAPVEPNVRIPNLIE</sequence>
<proteinExistence type="inferred from homology"/>